<dbReference type="EMBL" id="L23842">
    <property type="protein sequence ID" value="AAA21756.1"/>
    <property type="molecule type" value="mRNA"/>
</dbReference>
<dbReference type="PIR" id="I50483">
    <property type="entry name" value="I50483"/>
</dbReference>
<dbReference type="SMR" id="P48672"/>
<dbReference type="Proteomes" id="UP000515129">
    <property type="component" value="Unplaced"/>
</dbReference>
<dbReference type="GO" id="GO:0030424">
    <property type="term" value="C:axon"/>
    <property type="evidence" value="ECO:0007669"/>
    <property type="project" value="TreeGrafter"/>
</dbReference>
<dbReference type="GO" id="GO:0005737">
    <property type="term" value="C:cytoplasm"/>
    <property type="evidence" value="ECO:0007669"/>
    <property type="project" value="TreeGrafter"/>
</dbReference>
<dbReference type="GO" id="GO:0005882">
    <property type="term" value="C:intermediate filament"/>
    <property type="evidence" value="ECO:0007669"/>
    <property type="project" value="UniProtKB-KW"/>
</dbReference>
<dbReference type="GO" id="GO:0005886">
    <property type="term" value="C:plasma membrane"/>
    <property type="evidence" value="ECO:0007669"/>
    <property type="project" value="TreeGrafter"/>
</dbReference>
<dbReference type="GO" id="GO:0005200">
    <property type="term" value="F:structural constituent of cytoskeleton"/>
    <property type="evidence" value="ECO:0007669"/>
    <property type="project" value="TreeGrafter"/>
</dbReference>
<dbReference type="GO" id="GO:0045109">
    <property type="term" value="P:intermediate filament organization"/>
    <property type="evidence" value="ECO:0007669"/>
    <property type="project" value="TreeGrafter"/>
</dbReference>
<dbReference type="FunFam" id="1.20.5.170:FF:000002">
    <property type="entry name" value="Type I keratin KA11"/>
    <property type="match status" value="1"/>
</dbReference>
<dbReference type="FunFam" id="1.20.5.500:FF:000001">
    <property type="entry name" value="Type II keratin 23"/>
    <property type="match status" value="1"/>
</dbReference>
<dbReference type="Gene3D" id="1.20.5.170">
    <property type="match status" value="1"/>
</dbReference>
<dbReference type="Gene3D" id="1.20.5.500">
    <property type="entry name" value="Single helix bin"/>
    <property type="match status" value="1"/>
</dbReference>
<dbReference type="InterPro" id="IPR018039">
    <property type="entry name" value="IF_conserved"/>
</dbReference>
<dbReference type="InterPro" id="IPR039008">
    <property type="entry name" value="IF_rod_dom"/>
</dbReference>
<dbReference type="InterPro" id="IPR050405">
    <property type="entry name" value="Intermediate_filament"/>
</dbReference>
<dbReference type="PANTHER" id="PTHR45652">
    <property type="entry name" value="GLIAL FIBRILLARY ACIDIC PROTEIN"/>
    <property type="match status" value="1"/>
</dbReference>
<dbReference type="PANTHER" id="PTHR45652:SF5">
    <property type="entry name" value="VIMENTIN"/>
    <property type="match status" value="1"/>
</dbReference>
<dbReference type="Pfam" id="PF00038">
    <property type="entry name" value="Filament"/>
    <property type="match status" value="1"/>
</dbReference>
<dbReference type="SMART" id="SM01391">
    <property type="entry name" value="Filament"/>
    <property type="match status" value="1"/>
</dbReference>
<dbReference type="SUPFAM" id="SSF64593">
    <property type="entry name" value="Intermediate filament protein, coiled coil region"/>
    <property type="match status" value="1"/>
</dbReference>
<dbReference type="PROSITE" id="PS00226">
    <property type="entry name" value="IF_ROD_1"/>
    <property type="match status" value="1"/>
</dbReference>
<dbReference type="PROSITE" id="PS51842">
    <property type="entry name" value="IF_ROD_2"/>
    <property type="match status" value="1"/>
</dbReference>
<accession>P48672</accession>
<name>VIM2_CARAU</name>
<proteinExistence type="evidence at transcript level"/>
<comment type="function">
    <text>Vimentins are class-III intermediate filaments found in various non-epithelial cells, especially mesenchymal cells. Vimentin is attached to the nucleus, endoplasmic reticulum, and mitochondria, either laterally or terminally.</text>
</comment>
<comment type="subunit">
    <text evidence="1">Homomer.</text>
</comment>
<comment type="tissue specificity">
    <text>Expressed in low amounts in retina, optic nerve, and brain and in higher amounts in spinal cord.</text>
</comment>
<comment type="PTM">
    <text evidence="1">One of the most prominent phosphoproteins in various cells of mesenchymal origin. Phosphorylation is enhanced during cell division, at which time vimentin filaments are significantly reorganized (By similarity).</text>
</comment>
<comment type="similarity">
    <text evidence="2">Belongs to the intermediate filament family.</text>
</comment>
<sequence length="243" mass="28099">GFSLQDELDFLKKLHDEELADVQAQIQDQQVQVDMDMAKPDLTAALRDVRLQYENLATKNIQESEDWYKSKFADMTEAANKSNEALRLAKQEANEYRRQVQALTCEVDALKGTNESLERQMREIEENFAIESSSSQDNIARLEEDIRNMKDEMAKHLREYQDLLNVKMALDIEIATYRKLLEGEESRITTPLPNLSSFNLRDAILETKPILENTFSKKVLIKTIETRDGEVINESTQNHDDLE</sequence>
<keyword id="KW-0175">Coiled coil</keyword>
<keyword id="KW-0403">Intermediate filament</keyword>
<keyword id="KW-1185">Reference proteome</keyword>
<feature type="chain" id="PRO_0000063765" description="Vimentin A2">
    <location>
        <begin position="1" status="less than"/>
        <end position="243"/>
    </location>
</feature>
<feature type="domain" description="IF rod" evidence="2">
    <location>
        <begin position="1" status="less than"/>
        <end position="188"/>
    </location>
</feature>
<feature type="region of interest" description="Coil 1B">
    <location>
        <begin position="1" status="less than"/>
        <end position="22"/>
    </location>
</feature>
<feature type="region of interest" description="Linker 12">
    <location>
        <begin position="23"/>
        <end position="45"/>
    </location>
</feature>
<feature type="region of interest" description="Coil 2">
    <location>
        <begin position="46"/>
        <end position="184"/>
    </location>
</feature>
<feature type="region of interest" description="Tail">
    <location>
        <begin position="185"/>
        <end position="243"/>
    </location>
</feature>
<feature type="non-terminal residue">
    <location>
        <position position="1"/>
    </location>
</feature>
<protein>
    <recommendedName>
        <fullName>Vimentin A2</fullName>
    </recommendedName>
</protein>
<reference key="1">
    <citation type="journal article" date="1994" name="J. Neurochem.">
        <title>Cloning of multiple forms of goldfish vimentin: differential expression in CNS.</title>
        <authorList>
            <person name="Glasgow E."/>
            <person name="Druger R.K."/>
            <person name="Fuchs C."/>
            <person name="Levine E.M."/>
            <person name="Giordano S."/>
            <person name="Schechter N."/>
        </authorList>
    </citation>
    <scope>NUCLEOTIDE SEQUENCE [MRNA]</scope>
    <source>
        <tissue>Retina</tissue>
    </source>
</reference>
<organism>
    <name type="scientific">Carassius auratus</name>
    <name type="common">Goldfish</name>
    <dbReference type="NCBI Taxonomy" id="7957"/>
    <lineage>
        <taxon>Eukaryota</taxon>
        <taxon>Metazoa</taxon>
        <taxon>Chordata</taxon>
        <taxon>Craniata</taxon>
        <taxon>Vertebrata</taxon>
        <taxon>Euteleostomi</taxon>
        <taxon>Actinopterygii</taxon>
        <taxon>Neopterygii</taxon>
        <taxon>Teleostei</taxon>
        <taxon>Ostariophysi</taxon>
        <taxon>Cypriniformes</taxon>
        <taxon>Cyprinidae</taxon>
        <taxon>Cyprininae</taxon>
        <taxon>Carassius</taxon>
    </lineage>
</organism>
<evidence type="ECO:0000250" key="1"/>
<evidence type="ECO:0000255" key="2">
    <source>
        <dbReference type="PROSITE-ProRule" id="PRU01188"/>
    </source>
</evidence>